<feature type="chain" id="PRO_0000402762" description="3-aminoacrylate deaminase RutC">
    <location>
        <begin position="1"/>
        <end position="127"/>
    </location>
</feature>
<name>RUTC_PSE14</name>
<organism>
    <name type="scientific">Pseudomonas savastanoi pv. phaseolicola (strain 1448A / Race 6)</name>
    <name type="common">Pseudomonas syringae pv. phaseolicola (strain 1448A / Race 6)</name>
    <dbReference type="NCBI Taxonomy" id="264730"/>
    <lineage>
        <taxon>Bacteria</taxon>
        <taxon>Pseudomonadati</taxon>
        <taxon>Pseudomonadota</taxon>
        <taxon>Gammaproteobacteria</taxon>
        <taxon>Pseudomonadales</taxon>
        <taxon>Pseudomonadaceae</taxon>
        <taxon>Pseudomonas</taxon>
    </lineage>
</organism>
<comment type="function">
    <text evidence="1">Involved in pyrimidine catabolism. Catalyzes the deamination of 3-aminoacrylate to malonic semialdehyde, a reaction that can also occur spontaneously. RutC may facilitate the reaction and modulate the metabolic fitness, rather than catalyzing essential functions.</text>
</comment>
<comment type="catalytic activity">
    <reaction evidence="1">
        <text>(Z)-3-aminoacrylate + H2O + H(+) = 3-oxopropanoate + NH4(+)</text>
        <dbReference type="Rhea" id="RHEA:34947"/>
        <dbReference type="ChEBI" id="CHEBI:15377"/>
        <dbReference type="ChEBI" id="CHEBI:15378"/>
        <dbReference type="ChEBI" id="CHEBI:28938"/>
        <dbReference type="ChEBI" id="CHEBI:33190"/>
        <dbReference type="ChEBI" id="CHEBI:59894"/>
    </reaction>
</comment>
<comment type="similarity">
    <text evidence="1">Belongs to the RutC family.</text>
</comment>
<accession>Q48MQ6</accession>
<gene>
    <name evidence="1" type="primary">rutC</name>
    <name type="ordered locus">PSPPH_1046</name>
</gene>
<reference key="1">
    <citation type="journal article" date="2005" name="J. Bacteriol.">
        <title>Whole-genome sequence analysis of Pseudomonas syringae pv. phaseolicola 1448A reveals divergence among pathovars in genes involved in virulence and transposition.</title>
        <authorList>
            <person name="Joardar V."/>
            <person name="Lindeberg M."/>
            <person name="Jackson R.W."/>
            <person name="Selengut J."/>
            <person name="Dodson R."/>
            <person name="Brinkac L.M."/>
            <person name="Daugherty S.C."/>
            <person name="DeBoy R.T."/>
            <person name="Durkin A.S."/>
            <person name="Gwinn Giglio M."/>
            <person name="Madupu R."/>
            <person name="Nelson W.C."/>
            <person name="Rosovitz M.J."/>
            <person name="Sullivan S.A."/>
            <person name="Crabtree J."/>
            <person name="Creasy T."/>
            <person name="Davidsen T.M."/>
            <person name="Haft D.H."/>
            <person name="Zafar N."/>
            <person name="Zhou L."/>
            <person name="Halpin R."/>
            <person name="Holley T."/>
            <person name="Khouri H.M."/>
            <person name="Feldblyum T.V."/>
            <person name="White O."/>
            <person name="Fraser C.M."/>
            <person name="Chatterjee A.K."/>
            <person name="Cartinhour S."/>
            <person name="Schneider D."/>
            <person name="Mansfield J.W."/>
            <person name="Collmer A."/>
            <person name="Buell R."/>
        </authorList>
    </citation>
    <scope>NUCLEOTIDE SEQUENCE [LARGE SCALE GENOMIC DNA]</scope>
    <source>
        <strain>1448A / Race 6</strain>
    </source>
</reference>
<sequence length="127" mass="13689">MTKKAIIPAGTTKPIAPFVPGSMADGVLYVSGTLPFDKDNNVVHVGDATAQTRHVLETIKSVVETAGGTMDDVTFNMIMIRDWADYAKVNEVYAEYFAGEKPARYCIQCGLVKPEALIEIASIAHIG</sequence>
<evidence type="ECO:0000255" key="1">
    <source>
        <dbReference type="HAMAP-Rule" id="MF_00831"/>
    </source>
</evidence>
<proteinExistence type="inferred from homology"/>
<dbReference type="EC" id="3.5.-.-" evidence="1"/>
<dbReference type="EMBL" id="CP000058">
    <property type="protein sequence ID" value="AAZ33286.1"/>
    <property type="molecule type" value="Genomic_DNA"/>
</dbReference>
<dbReference type="RefSeq" id="WP_002552194.1">
    <property type="nucleotide sequence ID" value="NC_005773.3"/>
</dbReference>
<dbReference type="SMR" id="Q48MQ6"/>
<dbReference type="GeneID" id="69858035"/>
<dbReference type="KEGG" id="psp:PSPPH_1046"/>
<dbReference type="eggNOG" id="COG0251">
    <property type="taxonomic scope" value="Bacteria"/>
</dbReference>
<dbReference type="HOGENOM" id="CLU_100715_7_3_6"/>
<dbReference type="Proteomes" id="UP000000551">
    <property type="component" value="Chromosome"/>
</dbReference>
<dbReference type="GO" id="GO:0005829">
    <property type="term" value="C:cytosol"/>
    <property type="evidence" value="ECO:0007669"/>
    <property type="project" value="TreeGrafter"/>
</dbReference>
<dbReference type="GO" id="GO:0019239">
    <property type="term" value="F:deaminase activity"/>
    <property type="evidence" value="ECO:0007669"/>
    <property type="project" value="TreeGrafter"/>
</dbReference>
<dbReference type="GO" id="GO:0019740">
    <property type="term" value="P:nitrogen utilization"/>
    <property type="evidence" value="ECO:0007669"/>
    <property type="project" value="UniProtKB-UniRule"/>
</dbReference>
<dbReference type="GO" id="GO:0006212">
    <property type="term" value="P:uracil catabolic process"/>
    <property type="evidence" value="ECO:0007669"/>
    <property type="project" value="UniProtKB-UniRule"/>
</dbReference>
<dbReference type="CDD" id="cd00448">
    <property type="entry name" value="YjgF_YER057c_UK114_family"/>
    <property type="match status" value="1"/>
</dbReference>
<dbReference type="Gene3D" id="3.30.1330.40">
    <property type="entry name" value="RutC-like"/>
    <property type="match status" value="1"/>
</dbReference>
<dbReference type="HAMAP" id="MF_00831">
    <property type="entry name" value="RutC"/>
    <property type="match status" value="1"/>
</dbReference>
<dbReference type="InterPro" id="IPR019898">
    <property type="entry name" value="RutC"/>
</dbReference>
<dbReference type="InterPro" id="IPR035959">
    <property type="entry name" value="RutC-like_sf"/>
</dbReference>
<dbReference type="InterPro" id="IPR006175">
    <property type="entry name" value="YjgF/YER057c/UK114"/>
</dbReference>
<dbReference type="NCBIfam" id="TIGR03610">
    <property type="entry name" value="RutC"/>
    <property type="match status" value="1"/>
</dbReference>
<dbReference type="PANTHER" id="PTHR11803">
    <property type="entry name" value="2-IMINOBUTANOATE/2-IMINOPROPANOATE DEAMINASE RIDA"/>
    <property type="match status" value="1"/>
</dbReference>
<dbReference type="PANTHER" id="PTHR11803:SF58">
    <property type="entry name" value="PROTEIN HMF1-RELATED"/>
    <property type="match status" value="1"/>
</dbReference>
<dbReference type="Pfam" id="PF01042">
    <property type="entry name" value="Ribonuc_L-PSP"/>
    <property type="match status" value="1"/>
</dbReference>
<dbReference type="SUPFAM" id="SSF55298">
    <property type="entry name" value="YjgF-like"/>
    <property type="match status" value="1"/>
</dbReference>
<keyword id="KW-0378">Hydrolase</keyword>
<protein>
    <recommendedName>
        <fullName evidence="1">3-aminoacrylate deaminase RutC</fullName>
        <shortName evidence="1">3-AA deaminase</shortName>
        <ecNumber evidence="1">3.5.-.-</ecNumber>
    </recommendedName>
</protein>